<sequence>MACLGRPGCRGWAGASLVLVVVLALAACTESVAGRAMRATDRSSGLPTSAKPARARDLLLQDGDRAPFGQVTQSRVGDSYFTSAVPPECSAALLFKGSPLRPDGSSDHAEAAYNVTGPLPYAESVDVYTNVLNVHDVVWNGFRDVSHCRGDAVGVSRAGRSTPMRLRYFATLSDGVLVWTMSNPRWTCDYGLAVVPHAVLVLSACGFKPGFPMAEWASKRRAQLDSQV</sequence>
<keyword id="KW-1003">Cell membrane</keyword>
<keyword id="KW-0449">Lipoprotein</keyword>
<keyword id="KW-0472">Membrane</keyword>
<keyword id="KW-0564">Palmitate</keyword>
<keyword id="KW-1185">Reference proteome</keyword>
<keyword id="KW-0732">Signal</keyword>
<keyword id="KW-0812">Transmembrane</keyword>
<keyword id="KW-1133">Transmembrane helix</keyword>
<gene>
    <name type="primary">lprH</name>
    <name type="ordered locus">BQ2027_MB1453</name>
</gene>
<comment type="subcellular location">
    <subcellularLocation>
        <location evidence="2">Cell membrane</location>
        <topology evidence="2">Lipid-anchor</topology>
    </subcellularLocation>
</comment>
<proteinExistence type="inferred from homology"/>
<reference key="1">
    <citation type="journal article" date="2003" name="Proc. Natl. Acad. Sci. U.S.A.">
        <title>The complete genome sequence of Mycobacterium bovis.</title>
        <authorList>
            <person name="Garnier T."/>
            <person name="Eiglmeier K."/>
            <person name="Camus J.-C."/>
            <person name="Medina N."/>
            <person name="Mansoor H."/>
            <person name="Pryor M."/>
            <person name="Duthoy S."/>
            <person name="Grondin S."/>
            <person name="Lacroix C."/>
            <person name="Monsempe C."/>
            <person name="Simon S."/>
            <person name="Harris B."/>
            <person name="Atkin R."/>
            <person name="Doggett J."/>
            <person name="Mayes R."/>
            <person name="Keating L."/>
            <person name="Wheeler P.R."/>
            <person name="Parkhill J."/>
            <person name="Barrell B.G."/>
            <person name="Cole S.T."/>
            <person name="Gordon S.V."/>
            <person name="Hewinson R.G."/>
        </authorList>
    </citation>
    <scope>NUCLEOTIDE SEQUENCE [LARGE SCALE GENOMIC DNA]</scope>
    <source>
        <strain>ATCC BAA-935 / AF2122/97</strain>
    </source>
</reference>
<reference key="2">
    <citation type="journal article" date="2017" name="Genome Announc.">
        <title>Updated reference genome sequence and annotation of Mycobacterium bovis AF2122/97.</title>
        <authorList>
            <person name="Malone K.M."/>
            <person name="Farrell D."/>
            <person name="Stuber T.P."/>
            <person name="Schubert O.T."/>
            <person name="Aebersold R."/>
            <person name="Robbe-Austerman S."/>
            <person name="Gordon S.V."/>
        </authorList>
    </citation>
    <scope>NUCLEOTIDE SEQUENCE [LARGE SCALE GENOMIC DNA]</scope>
    <scope>GENOME REANNOTATION</scope>
    <source>
        <strain>ATCC BAA-935 / AF2122/97</strain>
    </source>
</reference>
<organism>
    <name type="scientific">Mycobacterium bovis (strain ATCC BAA-935 / AF2122/97)</name>
    <dbReference type="NCBI Taxonomy" id="233413"/>
    <lineage>
        <taxon>Bacteria</taxon>
        <taxon>Bacillati</taxon>
        <taxon>Actinomycetota</taxon>
        <taxon>Actinomycetes</taxon>
        <taxon>Mycobacteriales</taxon>
        <taxon>Mycobacteriaceae</taxon>
        <taxon>Mycobacterium</taxon>
        <taxon>Mycobacterium tuberculosis complex</taxon>
    </lineage>
</organism>
<protein>
    <recommendedName>
        <fullName>Putative lipoprotein LprH</fullName>
    </recommendedName>
</protein>
<accession>P65317</accession>
<accession>A0A1R3XYP4</accession>
<accession>P71687</accession>
<accession>X2BHV9</accession>
<name>LPRH_MYCBO</name>
<dbReference type="EMBL" id="LT708304">
    <property type="protein sequence ID" value="SIU00056.1"/>
    <property type="molecule type" value="Genomic_DNA"/>
</dbReference>
<dbReference type="RefSeq" id="NP_855105.1">
    <property type="nucleotide sequence ID" value="NC_002945.3"/>
</dbReference>
<dbReference type="RefSeq" id="WP_003407343.1">
    <property type="nucleotide sequence ID" value="NC_002945.4"/>
</dbReference>
<dbReference type="KEGG" id="mbo:BQ2027_MB1453"/>
<dbReference type="PATRIC" id="fig|233413.5.peg.1588"/>
<dbReference type="Proteomes" id="UP000001419">
    <property type="component" value="Chromosome"/>
</dbReference>
<dbReference type="GO" id="GO:0005886">
    <property type="term" value="C:plasma membrane"/>
    <property type="evidence" value="ECO:0007669"/>
    <property type="project" value="UniProtKB-SubCell"/>
</dbReference>
<dbReference type="PROSITE" id="PS51257">
    <property type="entry name" value="PROKAR_LIPOPROTEIN"/>
    <property type="match status" value="1"/>
</dbReference>
<feature type="signal peptide" evidence="2">
    <location>
        <begin position="1"/>
        <end position="27"/>
    </location>
</feature>
<feature type="chain" id="PRO_0000018147" description="Putative lipoprotein LprH">
    <location>
        <begin position="28"/>
        <end position="228"/>
    </location>
</feature>
<feature type="transmembrane region" description="Helical" evidence="1">
    <location>
        <begin position="191"/>
        <end position="211"/>
    </location>
</feature>
<feature type="lipid moiety-binding region" description="N-palmitoyl cysteine" evidence="2">
    <location>
        <position position="28"/>
    </location>
</feature>
<feature type="lipid moiety-binding region" description="S-diacylglycerol cysteine" evidence="2">
    <location>
        <position position="28"/>
    </location>
</feature>
<evidence type="ECO:0000255" key="1"/>
<evidence type="ECO:0000255" key="2">
    <source>
        <dbReference type="PROSITE-ProRule" id="PRU00303"/>
    </source>
</evidence>